<organism>
    <name type="scientific">Gallus gallus</name>
    <name type="common">Chicken</name>
    <dbReference type="NCBI Taxonomy" id="9031"/>
    <lineage>
        <taxon>Eukaryota</taxon>
        <taxon>Metazoa</taxon>
        <taxon>Chordata</taxon>
        <taxon>Craniata</taxon>
        <taxon>Vertebrata</taxon>
        <taxon>Euteleostomi</taxon>
        <taxon>Archelosauria</taxon>
        <taxon>Archosauria</taxon>
        <taxon>Dinosauria</taxon>
        <taxon>Saurischia</taxon>
        <taxon>Theropoda</taxon>
        <taxon>Coelurosauria</taxon>
        <taxon>Aves</taxon>
        <taxon>Neognathae</taxon>
        <taxon>Galloanserae</taxon>
        <taxon>Galliformes</taxon>
        <taxon>Phasianidae</taxon>
        <taxon>Phasianinae</taxon>
        <taxon>Gallus</taxon>
    </lineage>
</organism>
<protein>
    <recommendedName>
        <fullName>Histone H2B 1/2/3/4/6</fullName>
    </recommendedName>
    <alternativeName>
        <fullName>H2B I</fullName>
    </alternativeName>
    <alternativeName>
        <fullName>H2B II</fullName>
    </alternativeName>
    <alternativeName>
        <fullName>H2B III</fullName>
    </alternativeName>
    <alternativeName>
        <fullName>H2B IV</fullName>
    </alternativeName>
    <alternativeName>
        <fullName>H2B VI</fullName>
    </alternativeName>
</protein>
<proteinExistence type="evidence at protein level"/>
<keyword id="KW-0002">3D-structure</keyword>
<keyword id="KW-0007">Acetylation</keyword>
<keyword id="KW-0044">Antibiotic</keyword>
<keyword id="KW-0929">Antimicrobial</keyword>
<keyword id="KW-0158">Chromosome</keyword>
<keyword id="KW-0903">Direct protein sequencing</keyword>
<keyword id="KW-0238">DNA-binding</keyword>
<keyword id="KW-1017">Isopeptide bond</keyword>
<keyword id="KW-0544">Nucleosome core</keyword>
<keyword id="KW-0539">Nucleus</keyword>
<keyword id="KW-0597">Phosphoprotein</keyword>
<keyword id="KW-1185">Reference proteome</keyword>
<keyword id="KW-0832">Ubl conjugation</keyword>
<dbReference type="EMBL" id="V00415">
    <property type="protein sequence ID" value="CAA23706.1"/>
    <property type="molecule type" value="Genomic_DNA"/>
</dbReference>
<dbReference type="EMBL" id="X05094">
    <property type="protein sequence ID" value="CAA28745.1"/>
    <property type="molecule type" value="Genomic_DNA"/>
</dbReference>
<dbReference type="EMBL" id="X05095">
    <property type="protein sequence ID" value="CAA28746.1"/>
    <property type="molecule type" value="Genomic_DNA"/>
</dbReference>
<dbReference type="EMBL" id="X05096">
    <property type="protein sequence ID" value="CAA28747.1"/>
    <property type="molecule type" value="Genomic_DNA"/>
</dbReference>
<dbReference type="EMBL" id="X05097">
    <property type="protein sequence ID" value="CAA28748.1"/>
    <property type="molecule type" value="Genomic_DNA"/>
</dbReference>
<dbReference type="EMBL" id="X05098">
    <property type="protein sequence ID" value="CAA28749.1"/>
    <property type="molecule type" value="Genomic_DNA"/>
</dbReference>
<dbReference type="EMBL" id="X05100">
    <property type="protein sequence ID" value="CAA28751.1"/>
    <property type="molecule type" value="Genomic_DNA"/>
</dbReference>
<dbReference type="EMBL" id="X57263">
    <property type="protein sequence ID" value="CAA40537.1"/>
    <property type="molecule type" value="Genomic_DNA"/>
</dbReference>
<dbReference type="EMBL" id="X07763">
    <property type="protein sequence ID" value="CAA30590.1"/>
    <property type="molecule type" value="Genomic_DNA"/>
</dbReference>
<dbReference type="EMBL" id="X07766">
    <property type="protein sequence ID" value="CAA30596.1"/>
    <property type="molecule type" value="Genomic_DNA"/>
</dbReference>
<dbReference type="PIR" id="B26399">
    <property type="entry name" value="B26399"/>
</dbReference>
<dbReference type="PIR" id="S14510">
    <property type="entry name" value="HSCH22"/>
</dbReference>
<dbReference type="RefSeq" id="NP_001073188.1">
    <property type="nucleotide sequence ID" value="NM_001079720.1"/>
</dbReference>
<dbReference type="RefSeq" id="XP_001232985.1">
    <property type="nucleotide sequence ID" value="XM_001232984.3"/>
</dbReference>
<dbReference type="RefSeq" id="XP_001233227.1">
    <property type="nucleotide sequence ID" value="XM_001233226.4"/>
</dbReference>
<dbReference type="RefSeq" id="XP_004937730.1">
    <property type="nucleotide sequence ID" value="XM_004937673.2"/>
</dbReference>
<dbReference type="PDB" id="2ARO">
    <property type="method" value="X-ray"/>
    <property type="resolution" value="2.10 A"/>
    <property type="chains" value="B/F=1-126"/>
</dbReference>
<dbReference type="PDB" id="8YJM">
    <property type="method" value="X-ray"/>
    <property type="resolution" value="4.15 A"/>
    <property type="chains" value="G=34-126"/>
</dbReference>
<dbReference type="PDBsum" id="2ARO"/>
<dbReference type="PDBsum" id="8YJM"/>
<dbReference type="EMDB" id="EMD-0323"/>
<dbReference type="SMR" id="P0C1H3"/>
<dbReference type="BioGRID" id="679231">
    <property type="interactions" value="3"/>
</dbReference>
<dbReference type="FunCoup" id="P0C1H3">
    <property type="interactions" value="502"/>
</dbReference>
<dbReference type="IntAct" id="P0C1H3">
    <property type="interactions" value="1"/>
</dbReference>
<dbReference type="STRING" id="9031.ENSGALP00000042437"/>
<dbReference type="iPTMnet" id="P0C1H3"/>
<dbReference type="PaxDb" id="9031-ENSGALP00000021742"/>
<dbReference type="Ensembl" id="ENSGALT00000110557">
    <property type="protein sequence ID" value="ENSGALP00000081774"/>
    <property type="gene ID" value="ENSGALG00000061408"/>
</dbReference>
<dbReference type="Ensembl" id="ENSGALT00000110820">
    <property type="protein sequence ID" value="ENSGALP00000088361"/>
    <property type="gene ID" value="ENSGALG00000066578"/>
</dbReference>
<dbReference type="Ensembl" id="ENSGALT00000112431">
    <property type="protein sequence ID" value="ENSGALP00000079641"/>
    <property type="gene ID" value="ENSGALG00000061408"/>
</dbReference>
<dbReference type="Ensembl" id="ENSGALT00000127022">
    <property type="protein sequence ID" value="ENSGALP00000091331"/>
    <property type="gene ID" value="ENSGALG00000060032"/>
</dbReference>
<dbReference type="Ensembl" id="ENSGALT00000140813">
    <property type="protein sequence ID" value="ENSGALP00000082113"/>
    <property type="gene ID" value="ENSGALG00000055909"/>
</dbReference>
<dbReference type="Ensembl" id="ENSGALT00000142351">
    <property type="protein sequence ID" value="ENSGALP00000075373"/>
    <property type="gene ID" value="ENSGALG00000061408"/>
</dbReference>
<dbReference type="Ensembl" id="ENSGALT00010028687.1">
    <property type="protein sequence ID" value="ENSGALP00010016494.1"/>
    <property type="gene ID" value="ENSGALG00010011987.1"/>
</dbReference>
<dbReference type="Ensembl" id="ENSGALT00010029158.1">
    <property type="protein sequence ID" value="ENSGALP00010016905.1"/>
    <property type="gene ID" value="ENSGALG00010012157.1"/>
</dbReference>
<dbReference type="Ensembl" id="ENSGALT00010029546.1">
    <property type="protein sequence ID" value="ENSGALP00010017175.1"/>
    <property type="gene ID" value="ENSGALG00010012345.1"/>
</dbReference>
<dbReference type="Ensembl" id="ENSGALT00010034665.1">
    <property type="protein sequence ID" value="ENSGALP00010020343.1"/>
    <property type="gene ID" value="ENSGALG00010014416.1"/>
</dbReference>
<dbReference type="GeneID" id="100858607"/>
<dbReference type="GeneID" id="417956"/>
<dbReference type="GeneID" id="770267"/>
<dbReference type="KEGG" id="gga:100858607"/>
<dbReference type="KEGG" id="gga:417956"/>
<dbReference type="KEGG" id="gga:769973"/>
<dbReference type="KEGG" id="gga:770188"/>
<dbReference type="KEGG" id="gga:770267"/>
<dbReference type="CTD" id="100858607"/>
<dbReference type="CTD" id="417956"/>
<dbReference type="CTD" id="770267"/>
<dbReference type="VEuPathDB" id="HostDB:geneid_100858607"/>
<dbReference type="VEuPathDB" id="HostDB:geneid_417956"/>
<dbReference type="VEuPathDB" id="HostDB:geneid_770267"/>
<dbReference type="eggNOG" id="KOG1744">
    <property type="taxonomic scope" value="Eukaryota"/>
</dbReference>
<dbReference type="GeneTree" id="ENSGT01110000267181"/>
<dbReference type="GeneTree" id="ENSGT01130000278347"/>
<dbReference type="HOGENOM" id="CLU_075666_2_1_1"/>
<dbReference type="InParanoid" id="P0C1H3"/>
<dbReference type="OMA" id="TRSCCEP"/>
<dbReference type="OrthoDB" id="9117938at2759"/>
<dbReference type="PhylomeDB" id="P0C1H3"/>
<dbReference type="TreeFam" id="TF300212"/>
<dbReference type="Reactome" id="R-GGA-201722">
    <property type="pathway name" value="Formation of the beta-catenin:TCF transactivating complex"/>
</dbReference>
<dbReference type="Reactome" id="R-GGA-212300">
    <property type="pathway name" value="PRC2 methylates histones and DNA"/>
</dbReference>
<dbReference type="Reactome" id="R-GGA-2299718">
    <property type="pathway name" value="Condensation of Prophase Chromosomes"/>
</dbReference>
<dbReference type="Reactome" id="R-GGA-2559580">
    <property type="pathway name" value="Oxidative Stress Induced Senescence"/>
</dbReference>
<dbReference type="Reactome" id="R-GGA-3214815">
    <property type="pathway name" value="HDACs deacetylate histones"/>
</dbReference>
<dbReference type="Reactome" id="R-GGA-3214847">
    <property type="pathway name" value="HATs acetylate histones"/>
</dbReference>
<dbReference type="Reactome" id="R-GGA-5250924">
    <property type="pathway name" value="B-WICH complex positively regulates rRNA expression"/>
</dbReference>
<dbReference type="Reactome" id="R-GGA-5578749">
    <property type="pathway name" value="Transcriptional regulation by small RNAs"/>
</dbReference>
<dbReference type="Reactome" id="R-GGA-5625886">
    <property type="pathway name" value="Activated PKN1 stimulates transcription of AR (androgen receptor) regulated genes KLK2 and KLK3"/>
</dbReference>
<dbReference type="Reactome" id="R-GGA-5689880">
    <property type="pathway name" value="Ub-specific processing proteases"/>
</dbReference>
<dbReference type="Reactome" id="R-GGA-5693565">
    <property type="pathway name" value="Recruitment and ATM-mediated phosphorylation of repair and signaling proteins at DNA double strand breaks"/>
</dbReference>
<dbReference type="Reactome" id="R-GGA-5693571">
    <property type="pathway name" value="Nonhomologous End-Joining (NHEJ)"/>
</dbReference>
<dbReference type="Reactome" id="R-GGA-5693607">
    <property type="pathway name" value="Processing of DNA double-strand break ends"/>
</dbReference>
<dbReference type="Reactome" id="R-GGA-606279">
    <property type="pathway name" value="Deposition of new CENPA-containing nucleosomes at the centromere"/>
</dbReference>
<dbReference type="Reactome" id="R-GGA-68616">
    <property type="pathway name" value="Assembly of the ORC complex at the origin of replication"/>
</dbReference>
<dbReference type="Reactome" id="R-GGA-69473">
    <property type="pathway name" value="G2/M DNA damage checkpoint"/>
</dbReference>
<dbReference type="Reactome" id="R-GGA-73728">
    <property type="pathway name" value="RNA Polymerase I Promoter Opening"/>
</dbReference>
<dbReference type="Reactome" id="R-GGA-73772">
    <property type="pathway name" value="RNA Polymerase I Promoter Escape"/>
</dbReference>
<dbReference type="Reactome" id="R-GGA-8936459">
    <property type="pathway name" value="RUNX1 regulates genes involved in megakaryocyte differentiation and platelet function"/>
</dbReference>
<dbReference type="Reactome" id="R-GGA-9018519">
    <property type="pathway name" value="Estrogen-dependent gene expression"/>
</dbReference>
<dbReference type="Reactome" id="R-GGA-9841922">
    <property type="pathway name" value="MLL4 and MLL3 complexes regulate expression of PPARG target genes in adipogenesis and hepatic steatosis"/>
</dbReference>
<dbReference type="Reactome" id="R-GGA-9843940">
    <property type="pathway name" value="Regulation of endogenous retroelements by KRAB-ZFP proteins"/>
</dbReference>
<dbReference type="Reactome" id="R-GGA-9843970">
    <property type="pathway name" value="Regulation of endogenous retroelements by the Human Silencing Hub (HUSH) complex"/>
</dbReference>
<dbReference type="EvolutionaryTrace" id="P0C1H3"/>
<dbReference type="PRO" id="PR:P0C1H3"/>
<dbReference type="Proteomes" id="UP000000539">
    <property type="component" value="Chromosome 1"/>
</dbReference>
<dbReference type="Bgee" id="ENSGALG00000027571">
    <property type="expression patterns" value="Expressed in granulocyte and 10 other cell types or tissues"/>
</dbReference>
<dbReference type="GO" id="GO:0000786">
    <property type="term" value="C:nucleosome"/>
    <property type="evidence" value="ECO:0007669"/>
    <property type="project" value="UniProtKB-KW"/>
</dbReference>
<dbReference type="GO" id="GO:0005634">
    <property type="term" value="C:nucleus"/>
    <property type="evidence" value="ECO:0007669"/>
    <property type="project" value="UniProtKB-SubCell"/>
</dbReference>
<dbReference type="GO" id="GO:0003677">
    <property type="term" value="F:DNA binding"/>
    <property type="evidence" value="ECO:0007669"/>
    <property type="project" value="UniProtKB-KW"/>
</dbReference>
<dbReference type="GO" id="GO:0046982">
    <property type="term" value="F:protein heterodimerization activity"/>
    <property type="evidence" value="ECO:0007669"/>
    <property type="project" value="InterPro"/>
</dbReference>
<dbReference type="GO" id="GO:0030527">
    <property type="term" value="F:structural constituent of chromatin"/>
    <property type="evidence" value="ECO:0007669"/>
    <property type="project" value="InterPro"/>
</dbReference>
<dbReference type="GO" id="GO:0042742">
    <property type="term" value="P:defense response to bacterium"/>
    <property type="evidence" value="ECO:0007669"/>
    <property type="project" value="UniProtKB-KW"/>
</dbReference>
<dbReference type="CDD" id="cd22910">
    <property type="entry name" value="HFD_H2B"/>
    <property type="match status" value="1"/>
</dbReference>
<dbReference type="FunFam" id="1.10.20.10:FF:000003">
    <property type="entry name" value="Histone H2B"/>
    <property type="match status" value="1"/>
</dbReference>
<dbReference type="Gene3D" id="1.10.20.10">
    <property type="entry name" value="Histone, subunit A"/>
    <property type="match status" value="1"/>
</dbReference>
<dbReference type="InterPro" id="IPR009072">
    <property type="entry name" value="Histone-fold"/>
</dbReference>
<dbReference type="InterPro" id="IPR007125">
    <property type="entry name" value="Histone_H2A/H2B/H3"/>
</dbReference>
<dbReference type="InterPro" id="IPR000558">
    <property type="entry name" value="Histone_H2B"/>
</dbReference>
<dbReference type="InterPro" id="IPR055333">
    <property type="entry name" value="HISTONE_H2B_site"/>
</dbReference>
<dbReference type="PANTHER" id="PTHR23428">
    <property type="entry name" value="HISTONE H2B"/>
    <property type="match status" value="1"/>
</dbReference>
<dbReference type="Pfam" id="PF00125">
    <property type="entry name" value="Histone"/>
    <property type="match status" value="1"/>
</dbReference>
<dbReference type="PRINTS" id="PR00621">
    <property type="entry name" value="HISTONEH2B"/>
</dbReference>
<dbReference type="SMART" id="SM00427">
    <property type="entry name" value="H2B"/>
    <property type="match status" value="1"/>
</dbReference>
<dbReference type="SUPFAM" id="SSF47113">
    <property type="entry name" value="Histone-fold"/>
    <property type="match status" value="1"/>
</dbReference>
<dbReference type="PROSITE" id="PS00357">
    <property type="entry name" value="HISTONE_H2B"/>
    <property type="match status" value="1"/>
</dbReference>
<name>H2B1_CHICK</name>
<comment type="function">
    <text evidence="5">Core component of nucleosome. Nucleosomes wrap and compact DNA into chromatin, limiting DNA accessibility to the cellular machineries which require DNA as a template. Histones thereby play a central role in transcription regulation, DNA repair, DNA replication and chromosomal stability. DNA accessibility is regulated via a complex set of post-translational modifications of histones, also called histone code, and nucleosome remodeling.</text>
</comment>
<comment type="function">
    <text evidence="5">Has broad-spectrum antibacterial activity. May be important in the antimicrobial defenses of chick reproductive system during follicle development in the ovary and egg formation in the oviduct.</text>
</comment>
<comment type="subunit">
    <text>The nucleosome is a histone octamer containing two molecules each of H2A, H2B, H3 and H4 assembled in one H3-H4 heterotetramer and two H2A-H2B heterodimers. The octamer wraps approximately 147 bp of DNA.</text>
</comment>
<comment type="subcellular location">
    <subcellularLocation>
        <location>Nucleus</location>
    </subcellularLocation>
    <subcellularLocation>
        <location>Chromosome</location>
    </subcellularLocation>
</comment>
<comment type="PTM">
    <text evidence="1">Monoubiquitination of Lys-121 by the BRE1 gives a specific tag for epigenetic transcriptional activation and is also prerequisite for histone H3 'Lys-4' and 'Lys-79' methylation.</text>
</comment>
<comment type="PTM">
    <text evidence="3">Phosphorylated on Ser-15 during apoptosis; which facilitates apoptotic chromatin condensation.</text>
</comment>
<comment type="similarity">
    <text evidence="8">Belongs to the histone H2B family.</text>
</comment>
<gene>
    <name type="primary">H2B-I</name>
</gene>
<gene>
    <name type="primary">H2B-II</name>
</gene>
<gene>
    <name type="primary">H2B-III</name>
</gene>
<gene>
    <name type="primary">H2B-IV</name>
</gene>
<gene>
    <name type="primary">H2B-VI</name>
</gene>
<feature type="initiator methionine" description="Removed" evidence="6 7">
    <location>
        <position position="1"/>
    </location>
</feature>
<feature type="chain" id="PRO_0000071846" description="Histone H2B 1/2/3/4/6">
    <location>
        <begin position="2"/>
        <end position="126"/>
    </location>
</feature>
<feature type="region of interest" description="Disordered" evidence="2">
    <location>
        <begin position="1"/>
        <end position="36"/>
    </location>
</feature>
<feature type="compositionally biased region" description="Low complexity" evidence="2">
    <location>
        <begin position="1"/>
        <end position="12"/>
    </location>
</feature>
<feature type="compositionally biased region" description="Basic residues" evidence="2">
    <location>
        <begin position="13"/>
        <end position="34"/>
    </location>
</feature>
<feature type="modified residue" description="N6-acetyllysine" evidence="4">
    <location>
        <position position="6"/>
    </location>
</feature>
<feature type="modified residue" description="N6-acetyllysine" evidence="4">
    <location>
        <position position="13"/>
    </location>
</feature>
<feature type="modified residue" description="Phosphoserine" evidence="3">
    <location>
        <position position="15"/>
    </location>
</feature>
<feature type="modified residue" description="N6-acetyllysine" evidence="4">
    <location>
        <position position="16"/>
    </location>
</feature>
<feature type="modified residue" description="N6-acetyllysine" evidence="4">
    <location>
        <position position="21"/>
    </location>
</feature>
<feature type="cross-link" description="Glycyl lysine isopeptide (Lys-Gly) (interchain with G-Cter in ubiquitin)" evidence="9">
    <location>
        <position position="121"/>
    </location>
</feature>
<feature type="sequence conflict" description="In Ref. 2; CAA28745." evidence="8" ref="2">
    <original>G</original>
    <variation>A</variation>
    <location>
        <position position="14"/>
    </location>
</feature>
<feature type="sequence conflict" description="In Ref. 2; CAA28747." evidence="8" ref="2">
    <original>E</original>
    <variation>A</variation>
    <location>
        <position position="36"/>
    </location>
</feature>
<feature type="sequence conflict" description="In Ref. 6; AA sequence." evidence="8" ref="6">
    <original>I</original>
    <variation>S</variation>
    <location>
        <position position="62"/>
    </location>
</feature>
<feature type="sequence conflict" description="In Ref. 2; CAA28751." evidence="8" ref="2">
    <original>T</original>
    <variation>I</variation>
    <location>
        <position position="123"/>
    </location>
</feature>
<feature type="helix" evidence="10">
    <location>
        <begin position="39"/>
        <end position="49"/>
    </location>
</feature>
<feature type="helix" evidence="10">
    <location>
        <begin position="57"/>
        <end position="84"/>
    </location>
</feature>
<feature type="strand" evidence="10">
    <location>
        <begin position="88"/>
        <end position="90"/>
    </location>
</feature>
<feature type="helix" evidence="10">
    <location>
        <begin position="92"/>
        <end position="102"/>
    </location>
</feature>
<feature type="helix" evidence="10">
    <location>
        <begin position="105"/>
        <end position="124"/>
    </location>
</feature>
<reference key="1">
    <citation type="journal article" date="1982" name="J. Biol. Chem.">
        <title>Complete nucleotide sequence of a chicken H2B histone gene.</title>
        <authorList>
            <person name="Grandy D.K."/>
            <person name="Engel J.D."/>
            <person name="Dodgson J.B."/>
        </authorList>
    </citation>
    <scope>NUCLEOTIDE SEQUENCE [GENOMIC DNA]</scope>
</reference>
<reference key="2">
    <citation type="journal article" date="1987" name="Nucleic Acids Res.">
        <title>Structure and organization of the chicken H2B histone gene family.</title>
        <authorList>
            <person name="Grandy D.K."/>
            <person name="Dodgson J.B."/>
        </authorList>
    </citation>
    <scope>NUCLEOTIDE SEQUENCE [GENOMIC DNA]</scope>
    <source>
        <strain>White leghorn</strain>
        <tissue>Blood</tissue>
    </source>
</reference>
<reference key="3">
    <citation type="journal article" date="1991" name="Gene">
        <title>Nucleotide sequence of a member of the chicken H2B histone-encoding gene family.</title>
        <authorList>
            <person name="Nakayama T."/>
            <person name="Setoguchi Y."/>
        </authorList>
    </citation>
    <scope>NUCLEOTIDE SEQUENCE [GENOMIC DNA]</scope>
</reference>
<reference key="4">
    <citation type="journal article" date="1996" name="DNA Res.">
        <title>Organization of the chicken histone genes in a major gene cluster and generation of an almost complete set of the core histone protein sequences.</title>
        <authorList>
            <person name="Takami Y."/>
            <person name="Higashio M."/>
            <person name="Fukuoka T."/>
            <person name="Takechi S."/>
            <person name="Nakayama T."/>
        </authorList>
    </citation>
    <scope>NUCLEOTIDE SEQUENCE [GENOMIC DNA]</scope>
    <scope>NOMENCLATURE</scope>
    <source>
        <strain>White leghorn</strain>
    </source>
</reference>
<reference key="5">
    <citation type="journal article" date="1988" name="Nucleic Acids Res.">
        <title>Conservation of histone H2A/H2B intergene regions: a role for the H2B specific element in divergent transcription.</title>
        <authorList>
            <person name="Sturm R.A."/>
            <person name="Dalton S."/>
            <person name="Wells J.R.E."/>
        </authorList>
    </citation>
    <scope>NUCLEOTIDE SEQUENCE [GENOMIC DNA]</scope>
</reference>
<reference key="6">
    <citation type="journal article" date="1982" name="Biochim. Biophys. Acta">
        <title>The complete amino-acid sequence of histone H2B from erythrocytes of the adult domestic fowl Gallus domesticus.</title>
        <authorList>
            <person name="van Helden P."/>
            <person name="Strickland W.N."/>
            <person name="Strickland M."/>
            <person name="von Holt C."/>
        </authorList>
    </citation>
    <scope>PROTEIN SEQUENCE OF 2-126</scope>
</reference>
<reference key="7">
    <citation type="journal article" date="1978" name="Biochim. Biophys. Acta">
        <title>Histone H2B variants from the erythrocytes of an amphibian, a reptile and a bird.</title>
        <authorList>
            <person name="van Helden P."/>
            <person name="Strickland W.N."/>
            <person name="Brandt W.F."/>
            <person name="von Holt C."/>
        </authorList>
    </citation>
    <scope>PROTEIN SEQUENCE OF 2-30 AND 62-90</scope>
    <source>
        <tissue>Erythrocyte</tissue>
    </source>
</reference>
<reference key="8">
    <citation type="journal article" date="1989" name="Biochemistry">
        <title>Ubiquitinated histone H2B is preferentially located in transcriptionally active chromatin.</title>
        <authorList>
            <person name="Nickel B.E."/>
            <person name="Allis C.D."/>
            <person name="Davie J.R."/>
        </authorList>
    </citation>
    <scope>UBIQUITINATION</scope>
</reference>
<reference key="9">
    <citation type="journal article" date="2003" name="Cell">
        <title>Apoptotic phosphorylation of histone H2B is mediated by mammalian sterile twenty kinase.</title>
        <authorList>
            <person name="Cheung W.L."/>
            <person name="Ajiro K."/>
            <person name="Samejima K."/>
            <person name="Kloc M."/>
            <person name="Cheung P."/>
            <person name="Mizzen C.A."/>
            <person name="Beeser A."/>
            <person name="Etkin L.D."/>
            <person name="Chernoff J."/>
            <person name="Earnshaw W.C."/>
            <person name="Allis C.D."/>
        </authorList>
    </citation>
    <scope>PHOSPHORYLATION AT SER-15</scope>
</reference>
<reference key="10">
    <citation type="journal article" date="2003" name="J. Biol. Chem.">
        <title>Acetylation of histone H2B mirrors that of H4 and H3 at the chicken beta-globin locus but not at housekeeping genes.</title>
        <authorList>
            <person name="Myers F.A."/>
            <person name="Chong W."/>
            <person name="Evans D.R."/>
            <person name="Thorne A.W."/>
            <person name="Crane-Robinson C."/>
        </authorList>
    </citation>
    <scope>ACETYLATION AT LYS-6; LYS-13; LYS-16 AND LYS-21</scope>
</reference>
<reference key="11">
    <citation type="journal article" date="2006" name="Biochem. Biophys. Res. Commun.">
        <title>Antimicrobial proteins in chicken reproductive system.</title>
        <authorList>
            <person name="Silphaduang U."/>
            <person name="Hincke M.T."/>
            <person name="Nys Y."/>
            <person name="Mine Y."/>
        </authorList>
    </citation>
    <scope>FUNCTION AS AN ANTIBIOTIC</scope>
    <scope>IDENTIFICATION BY MASS SPECTROMETRY</scope>
</reference>
<reference key="12">
    <citation type="journal article" date="1991" name="Proc. Natl. Acad. Sci. U.S.A.">
        <title>The nucleosomal core histone octamer at 3.1 A resolution: a tripartite protein assembly and a left-handed superhelix.</title>
        <authorList>
            <person name="Arents G."/>
            <person name="Burlingame R.W."/>
            <person name="Wang B.-C."/>
            <person name="Love W.E."/>
            <person name="Moudrianakis E.N."/>
        </authorList>
    </citation>
    <scope>X-RAY CRYSTALLOGRAPHY (3.1 ANGSTROMS)</scope>
</reference>
<accession>P0C1H3</accession>
<accession>P02279</accession>
<accession>Q92067</accession>
<sequence length="126" mass="13922">MPEPAKSAPAPKKGSKKAVTKTQKKGDKKRKKSRKESYSIYVYKVLKQVHPDTGISSKAMGIMNSFVNDIFERIAGEASRLAHYNKRSTITSREIQTAVRLLLPGELAKHAVSEGTKAVTKYTSSK</sequence>
<evidence type="ECO:0000250" key="1">
    <source>
        <dbReference type="UniProtKB" id="P33778"/>
    </source>
</evidence>
<evidence type="ECO:0000256" key="2">
    <source>
        <dbReference type="SAM" id="MobiDB-lite"/>
    </source>
</evidence>
<evidence type="ECO:0000269" key="3">
    <source>
    </source>
</evidence>
<evidence type="ECO:0000269" key="4">
    <source>
    </source>
</evidence>
<evidence type="ECO:0000269" key="5">
    <source>
    </source>
</evidence>
<evidence type="ECO:0000269" key="6">
    <source>
    </source>
</evidence>
<evidence type="ECO:0000269" key="7">
    <source>
    </source>
</evidence>
<evidence type="ECO:0000305" key="8"/>
<evidence type="ECO:0000305" key="9">
    <source>
    </source>
</evidence>
<evidence type="ECO:0007829" key="10">
    <source>
        <dbReference type="PDB" id="2ARO"/>
    </source>
</evidence>